<dbReference type="EMBL" id="D50617">
    <property type="protein sequence ID" value="BAA09200.1"/>
    <property type="molecule type" value="Genomic_DNA"/>
</dbReference>
<dbReference type="EMBL" id="BK006940">
    <property type="protein sequence ID" value="DAA12400.1"/>
    <property type="molecule type" value="Genomic_DNA"/>
</dbReference>
<dbReference type="PIR" id="S56215">
    <property type="entry name" value="S56215"/>
</dbReference>
<dbReference type="RefSeq" id="NP_116613.1">
    <property type="nucleotide sequence ID" value="NM_001179926.1"/>
</dbReference>
<dbReference type="SMR" id="P43562"/>
<dbReference type="BioGRID" id="31106">
    <property type="interactions" value="31"/>
</dbReference>
<dbReference type="DIP" id="DIP-4427N"/>
<dbReference type="FunCoup" id="P43562">
    <property type="interactions" value="109"/>
</dbReference>
<dbReference type="IntAct" id="P43562">
    <property type="interactions" value="4"/>
</dbReference>
<dbReference type="MINT" id="P43562"/>
<dbReference type="STRING" id="4932.YFL040W"/>
<dbReference type="TCDB" id="2.A.1.1.100">
    <property type="family name" value="the major facilitator superfamily (mfs)"/>
</dbReference>
<dbReference type="GlyGen" id="P43562">
    <property type="glycosylation" value="2 sites"/>
</dbReference>
<dbReference type="iPTMnet" id="P43562"/>
<dbReference type="PaxDb" id="4932-YFL040W"/>
<dbReference type="PeptideAtlas" id="P43562"/>
<dbReference type="EnsemblFungi" id="YFL040W_mRNA">
    <property type="protein sequence ID" value="YFL040W"/>
    <property type="gene ID" value="YFL040W"/>
</dbReference>
<dbReference type="GeneID" id="850503"/>
<dbReference type="KEGG" id="sce:YFL040W"/>
<dbReference type="AGR" id="SGD:S000001854"/>
<dbReference type="SGD" id="S000001854">
    <property type="gene designation" value="YFL040W"/>
</dbReference>
<dbReference type="VEuPathDB" id="FungiDB:YFL040W"/>
<dbReference type="eggNOG" id="KOG0254">
    <property type="taxonomic scope" value="Eukaryota"/>
</dbReference>
<dbReference type="HOGENOM" id="CLU_001265_30_12_1"/>
<dbReference type="InParanoid" id="P43562"/>
<dbReference type="OMA" id="ITYICEM"/>
<dbReference type="OrthoDB" id="4142200at2759"/>
<dbReference type="BioCyc" id="YEAST:G3O-30422-MONOMER"/>
<dbReference type="BioGRID-ORCS" id="850503">
    <property type="hits" value="1 hit in 10 CRISPR screens"/>
</dbReference>
<dbReference type="PRO" id="PR:P43562"/>
<dbReference type="Proteomes" id="UP000002311">
    <property type="component" value="Chromosome VI"/>
</dbReference>
<dbReference type="RNAct" id="P43562">
    <property type="molecule type" value="protein"/>
</dbReference>
<dbReference type="GO" id="GO:0000324">
    <property type="term" value="C:fungal-type vacuole"/>
    <property type="evidence" value="ECO:0007005"/>
    <property type="project" value="SGD"/>
</dbReference>
<dbReference type="GO" id="GO:0016020">
    <property type="term" value="C:membrane"/>
    <property type="evidence" value="ECO:0000250"/>
    <property type="project" value="SGD"/>
</dbReference>
<dbReference type="GO" id="GO:0005628">
    <property type="term" value="C:prospore membrane"/>
    <property type="evidence" value="ECO:0007005"/>
    <property type="project" value="SGD"/>
</dbReference>
<dbReference type="GO" id="GO:0005366">
    <property type="term" value="F:myo-inositol:proton symporter activity"/>
    <property type="evidence" value="ECO:0000318"/>
    <property type="project" value="GO_Central"/>
</dbReference>
<dbReference type="GO" id="GO:0022857">
    <property type="term" value="F:transmembrane transporter activity"/>
    <property type="evidence" value="ECO:0000250"/>
    <property type="project" value="SGD"/>
</dbReference>
<dbReference type="GO" id="GO:1904679">
    <property type="term" value="P:myo-inositol import across plasma membrane"/>
    <property type="evidence" value="ECO:0000318"/>
    <property type="project" value="GO_Central"/>
</dbReference>
<dbReference type="GO" id="GO:0055085">
    <property type="term" value="P:transmembrane transport"/>
    <property type="evidence" value="ECO:0000250"/>
    <property type="project" value="SGD"/>
</dbReference>
<dbReference type="CDD" id="cd17356">
    <property type="entry name" value="MFS_HXT"/>
    <property type="match status" value="1"/>
</dbReference>
<dbReference type="FunFam" id="1.20.1250.20:FF:000564">
    <property type="entry name" value="YFL040W-like protein"/>
    <property type="match status" value="1"/>
</dbReference>
<dbReference type="Gene3D" id="1.20.1250.20">
    <property type="entry name" value="MFS general substrate transporter like domains"/>
    <property type="match status" value="1"/>
</dbReference>
<dbReference type="InterPro" id="IPR020846">
    <property type="entry name" value="MFS_dom"/>
</dbReference>
<dbReference type="InterPro" id="IPR005828">
    <property type="entry name" value="MFS_sugar_transport-like"/>
</dbReference>
<dbReference type="InterPro" id="IPR050360">
    <property type="entry name" value="MFS_Sugar_Transporters"/>
</dbReference>
<dbReference type="InterPro" id="IPR036259">
    <property type="entry name" value="MFS_trans_sf"/>
</dbReference>
<dbReference type="InterPro" id="IPR005829">
    <property type="entry name" value="Sugar_transporter_CS"/>
</dbReference>
<dbReference type="PANTHER" id="PTHR48022:SF7">
    <property type="entry name" value="MAJOR FACILITATOR SUPERFAMILY (MFS) PROFILE DOMAIN-CONTAINING PROTEIN-RELATED"/>
    <property type="match status" value="1"/>
</dbReference>
<dbReference type="PANTHER" id="PTHR48022">
    <property type="entry name" value="PLASTIDIC GLUCOSE TRANSPORTER 4"/>
    <property type="match status" value="1"/>
</dbReference>
<dbReference type="Pfam" id="PF00083">
    <property type="entry name" value="Sugar_tr"/>
    <property type="match status" value="1"/>
</dbReference>
<dbReference type="SUPFAM" id="SSF103473">
    <property type="entry name" value="MFS general substrate transporter"/>
    <property type="match status" value="1"/>
</dbReference>
<dbReference type="PROSITE" id="PS50850">
    <property type="entry name" value="MFS"/>
    <property type="match status" value="1"/>
</dbReference>
<dbReference type="PROSITE" id="PS00217">
    <property type="entry name" value="SUGAR_TRANSPORT_2"/>
    <property type="match status" value="1"/>
</dbReference>
<accession>P43562</accession>
<accession>D6VTJ0</accession>
<name>YFE0_YEAST</name>
<comment type="subcellular location">
    <subcellularLocation>
        <location>Membrane</location>
        <topology>Multi-pass membrane protein</topology>
    </subcellularLocation>
</comment>
<comment type="similarity">
    <text evidence="3">Belongs to the major facilitator superfamily. Sugar transporter (TC 2.A.1.1) family.</text>
</comment>
<gene>
    <name type="ordered locus">YFL040W</name>
</gene>
<organism>
    <name type="scientific">Saccharomyces cerevisiae (strain ATCC 204508 / S288c)</name>
    <name type="common">Baker's yeast</name>
    <dbReference type="NCBI Taxonomy" id="559292"/>
    <lineage>
        <taxon>Eukaryota</taxon>
        <taxon>Fungi</taxon>
        <taxon>Dikarya</taxon>
        <taxon>Ascomycota</taxon>
        <taxon>Saccharomycotina</taxon>
        <taxon>Saccharomycetes</taxon>
        <taxon>Saccharomycetales</taxon>
        <taxon>Saccharomycetaceae</taxon>
        <taxon>Saccharomyces</taxon>
    </lineage>
</organism>
<sequence length="540" mass="60610">MTAMKAIVWRLPKMPKIKITKTYEVTKITAILTLVGFIMGLEVPSLATFLTNKTFNEYFKYPTPLQQGLLMGSTPLGGIMGCFICCIMNDRFSRIYQFQSGIIIWNIVTLLNFCIWDILGLLICRMIKGMILGNFSILVASYANEVIPRGKRGSTMSYIQLCLTIGILVMHYLCIALSLWDSHFAFRIAWCIGIIPGLLFWMASYALPESYHWLVLHGKMSEAQEIQHNLAKKFNESQPRDAVPEMSKIELAGDFWIGVNDLDFSKKLPRGSFKPLILGMTLQLLVQFSGINIILGYITYICEIVGLEGNVKLFTSSIPYFINMVLSLLPITFIDYTSRKLITLLGGFPISGLLITIGALFVKYGQDTKPIDGNRSLVWSIGENPFVGGWILTLCFLIVGIFAMSLSSIPWVYTNEMLPSRVKVKGFAICVTFGWLGNFILTFLCPVMIERLKGTTFIIFGSLTFLISLSVLIWFPETKGMSIEDIDKFFEFESKEGTNLHGEKGIKTPDSNSNGGSTRSSQEGQLHKPIKLKSDEEMII</sequence>
<keyword id="KW-0325">Glycoprotein</keyword>
<keyword id="KW-0472">Membrane</keyword>
<keyword id="KW-1185">Reference proteome</keyword>
<keyword id="KW-0677">Repeat</keyword>
<keyword id="KW-0812">Transmembrane</keyword>
<keyword id="KW-1133">Transmembrane helix</keyword>
<keyword id="KW-0813">Transport</keyword>
<feature type="chain" id="PRO_0000050464" description="Probable metabolite transport protein YFL040W">
    <location>
        <begin position="1"/>
        <end position="540"/>
    </location>
</feature>
<feature type="topological domain" description="Cytoplasmic" evidence="1">
    <location>
        <begin position="1"/>
        <end position="29"/>
    </location>
</feature>
<feature type="transmembrane region" description="Helical; Name=1" evidence="1">
    <location>
        <begin position="30"/>
        <end position="50"/>
    </location>
</feature>
<feature type="topological domain" description="Extracellular" evidence="1">
    <location>
        <begin position="51"/>
        <end position="67"/>
    </location>
</feature>
<feature type="transmembrane region" description="Helical; Name=2" evidence="1">
    <location>
        <begin position="68"/>
        <end position="88"/>
    </location>
</feature>
<feature type="topological domain" description="Cytoplasmic" evidence="1">
    <location>
        <begin position="89"/>
        <end position="101"/>
    </location>
</feature>
<feature type="transmembrane region" description="Helical; Name=3" evidence="1">
    <location>
        <begin position="102"/>
        <end position="122"/>
    </location>
</feature>
<feature type="topological domain" description="Extracellular" evidence="1">
    <location>
        <begin position="123"/>
        <end position="126"/>
    </location>
</feature>
<feature type="transmembrane region" description="Helical; Name=4" evidence="1">
    <location>
        <begin position="127"/>
        <end position="147"/>
    </location>
</feature>
<feature type="topological domain" description="Cytoplasmic" evidence="1">
    <location>
        <begin position="148"/>
        <end position="158"/>
    </location>
</feature>
<feature type="transmembrane region" description="Helical; Name=5" evidence="1">
    <location>
        <begin position="159"/>
        <end position="179"/>
    </location>
</feature>
<feature type="topological domain" description="Extracellular" evidence="1">
    <location>
        <begin position="180"/>
        <end position="187"/>
    </location>
</feature>
<feature type="transmembrane region" description="Helical; Name=6" evidence="1">
    <location>
        <begin position="188"/>
        <end position="208"/>
    </location>
</feature>
<feature type="topological domain" description="Cytoplasmic" evidence="1">
    <location>
        <begin position="209"/>
        <end position="275"/>
    </location>
</feature>
<feature type="transmembrane region" description="Helical; Name=7" evidence="1">
    <location>
        <begin position="276"/>
        <end position="296"/>
    </location>
</feature>
<feature type="topological domain" description="Extracellular" evidence="1">
    <location>
        <begin position="297"/>
        <end position="313"/>
    </location>
</feature>
<feature type="transmembrane region" description="Helical; Name=8" evidence="1">
    <location>
        <begin position="314"/>
        <end position="334"/>
    </location>
</feature>
<feature type="topological domain" description="Cytoplasmic" evidence="1">
    <location>
        <begin position="335"/>
        <end position="341"/>
    </location>
</feature>
<feature type="transmembrane region" description="Helical; Name=9" evidence="1">
    <location>
        <begin position="342"/>
        <end position="362"/>
    </location>
</feature>
<feature type="topological domain" description="Extracellular" evidence="1">
    <location>
        <begin position="363"/>
        <end position="385"/>
    </location>
</feature>
<feature type="transmembrane region" description="Helical; Name=10" evidence="1">
    <location>
        <begin position="386"/>
        <end position="406"/>
    </location>
</feature>
<feature type="topological domain" description="Cytoplasmic" evidence="1">
    <location>
        <begin position="407"/>
        <end position="428"/>
    </location>
</feature>
<feature type="transmembrane region" description="Helical; Name=11" evidence="1">
    <location>
        <begin position="429"/>
        <end position="449"/>
    </location>
</feature>
<feature type="topological domain" description="Extracellular" evidence="1">
    <location>
        <begin position="450"/>
        <end position="455"/>
    </location>
</feature>
<feature type="transmembrane region" description="Helical; Name=12" evidence="1">
    <location>
        <begin position="456"/>
        <end position="476"/>
    </location>
</feature>
<feature type="topological domain" description="Cytoplasmic" evidence="1">
    <location>
        <begin position="477"/>
        <end position="540"/>
    </location>
</feature>
<feature type="region of interest" description="Disordered" evidence="2">
    <location>
        <begin position="499"/>
        <end position="540"/>
    </location>
</feature>
<feature type="compositionally biased region" description="Polar residues" evidence="2">
    <location>
        <begin position="509"/>
        <end position="524"/>
    </location>
</feature>
<feature type="glycosylation site" description="N-linked (GlcNAc...) asparagine" evidence="1">
    <location>
        <position position="52"/>
    </location>
</feature>
<feature type="glycosylation site" description="N-linked (GlcNAc...) asparagine" evidence="1">
    <location>
        <position position="374"/>
    </location>
</feature>
<protein>
    <recommendedName>
        <fullName>Probable metabolite transport protein YFL040W</fullName>
    </recommendedName>
</protein>
<evidence type="ECO:0000255" key="1"/>
<evidence type="ECO:0000256" key="2">
    <source>
        <dbReference type="SAM" id="MobiDB-lite"/>
    </source>
</evidence>
<evidence type="ECO:0000305" key="3"/>
<reference key="1">
    <citation type="journal article" date="1995" name="Nat. Genet.">
        <title>Analysis of the nucleotide sequence of chromosome VI from Saccharomyces cerevisiae.</title>
        <authorList>
            <person name="Murakami Y."/>
            <person name="Naitou M."/>
            <person name="Hagiwara H."/>
            <person name="Shibata T."/>
            <person name="Ozawa M."/>
            <person name="Sasanuma S."/>
            <person name="Sasanuma M."/>
            <person name="Tsuchiya Y."/>
            <person name="Soeda E."/>
            <person name="Yokoyama K."/>
            <person name="Yamazaki M."/>
            <person name="Tashiro H."/>
            <person name="Eki T."/>
        </authorList>
    </citation>
    <scope>NUCLEOTIDE SEQUENCE [LARGE SCALE GENOMIC DNA]</scope>
    <source>
        <strain>ATCC 204508 / S288c</strain>
    </source>
</reference>
<reference key="2">
    <citation type="journal article" date="2014" name="G3 (Bethesda)">
        <title>The reference genome sequence of Saccharomyces cerevisiae: Then and now.</title>
        <authorList>
            <person name="Engel S.R."/>
            <person name="Dietrich F.S."/>
            <person name="Fisk D.G."/>
            <person name="Binkley G."/>
            <person name="Balakrishnan R."/>
            <person name="Costanzo M.C."/>
            <person name="Dwight S.S."/>
            <person name="Hitz B.C."/>
            <person name="Karra K."/>
            <person name="Nash R.S."/>
            <person name="Weng S."/>
            <person name="Wong E.D."/>
            <person name="Lloyd P."/>
            <person name="Skrzypek M.S."/>
            <person name="Miyasato S.R."/>
            <person name="Simison M."/>
            <person name="Cherry J.M."/>
        </authorList>
    </citation>
    <scope>GENOME REANNOTATION</scope>
    <source>
        <strain>ATCC 204508 / S288c</strain>
    </source>
</reference>
<reference key="3">
    <citation type="journal article" date="2006" name="Proc. Natl. Acad. Sci. U.S.A.">
        <title>A global topology map of the Saccharomyces cerevisiae membrane proteome.</title>
        <authorList>
            <person name="Kim H."/>
            <person name="Melen K."/>
            <person name="Oesterberg M."/>
            <person name="von Heijne G."/>
        </authorList>
    </citation>
    <scope>TOPOLOGY [LARGE SCALE ANALYSIS]</scope>
    <source>
        <strain>ATCC 208353 / W303-1A</strain>
    </source>
</reference>
<proteinExistence type="evidence at protein level"/>